<protein>
    <recommendedName>
        <fullName>F-box A protein 224</fullName>
    </recommendedName>
</protein>
<gene>
    <name type="primary">fbxa-224</name>
    <name type="ORF">ZK1290.9</name>
</gene>
<name>FB224_CAEEL</name>
<organism>
    <name type="scientific">Caenorhabditis elegans</name>
    <dbReference type="NCBI Taxonomy" id="6239"/>
    <lineage>
        <taxon>Eukaryota</taxon>
        <taxon>Metazoa</taxon>
        <taxon>Ecdysozoa</taxon>
        <taxon>Nematoda</taxon>
        <taxon>Chromadorea</taxon>
        <taxon>Rhabditida</taxon>
        <taxon>Rhabditina</taxon>
        <taxon>Rhabditomorpha</taxon>
        <taxon>Rhabditoidea</taxon>
        <taxon>Rhabditidae</taxon>
        <taxon>Peloderinae</taxon>
        <taxon>Caenorhabditis</taxon>
    </lineage>
</organism>
<comment type="similarity">
    <text evidence="2">Belongs to the FTH family.</text>
</comment>
<sequence length="384" mass="44583">MSAAIRENELLIRACILYESLDDKPIAESYKNFCRKVGKDIMTLHDFDYWFYRFHNGNHDLYHDRSKDPKPKSLSDFPIGVMYDVLGHVDPFERLVLRKVSRNLRDVVQKMRCELDALYVNKENTCISIGFGQGTITYSQVDNGCQVDQWKSSSGYKKKFVEGGDFMELFNTDFRTLLENKKVILNSFDVHHYLLARNGTNEEQFLDHLIEIIKSSNKFTTRSFGIGDLSFDKIARFLELMEPKSLEKLEIGNIIGSTDYDHLVNTEQWKTLKHFISECVEISIPIDHLLHFTTMKVDLTELTVHDALKIRDMLDTSETFDYAMIYVKMTDPIEVARVFNPEYNNDDNQNRLFYYTNPGNKKFAIGSSKSMLSISDLASDYFAD</sequence>
<proteinExistence type="inferred from homology"/>
<feature type="chain" id="PRO_0000065567" description="F-box A protein 224">
    <location>
        <begin position="1"/>
        <end position="384"/>
    </location>
</feature>
<feature type="domain" description="F-box" evidence="1">
    <location>
        <begin position="71"/>
        <end position="122"/>
    </location>
</feature>
<reference key="1">
    <citation type="journal article" date="1998" name="Science">
        <title>Genome sequence of the nematode C. elegans: a platform for investigating biology.</title>
        <authorList>
            <consortium name="The C. elegans sequencing consortium"/>
        </authorList>
    </citation>
    <scope>NUCLEOTIDE SEQUENCE [LARGE SCALE GENOMIC DNA]</scope>
    <source>
        <strain>Bristol N2</strain>
    </source>
</reference>
<evidence type="ECO:0000255" key="1">
    <source>
        <dbReference type="PROSITE-ProRule" id="PRU00080"/>
    </source>
</evidence>
<evidence type="ECO:0000305" key="2"/>
<dbReference type="EMBL" id="FO080700">
    <property type="protein sequence ID" value="CCD65947.1"/>
    <property type="molecule type" value="Genomic_DNA"/>
</dbReference>
<dbReference type="PIR" id="T34508">
    <property type="entry name" value="T34508"/>
</dbReference>
<dbReference type="RefSeq" id="NP_495583.3">
    <property type="nucleotide sequence ID" value="NM_063182.4"/>
</dbReference>
<dbReference type="FunCoup" id="Q09336">
    <property type="interactions" value="4"/>
</dbReference>
<dbReference type="PaxDb" id="6239-ZK1290.9"/>
<dbReference type="EnsemblMetazoa" id="ZK1290.9.1">
    <property type="protein sequence ID" value="ZK1290.9.1"/>
    <property type="gene ID" value="WBGene00022890"/>
</dbReference>
<dbReference type="GeneID" id="191557"/>
<dbReference type="KEGG" id="cel:CELE_ZK1290.9"/>
<dbReference type="AGR" id="WB:WBGene00022890"/>
<dbReference type="CTD" id="191557"/>
<dbReference type="WormBase" id="ZK1290.9">
    <property type="protein sequence ID" value="CE44940"/>
    <property type="gene ID" value="WBGene00022890"/>
    <property type="gene designation" value="fbxa-224"/>
</dbReference>
<dbReference type="eggNOG" id="ENOG502RT5I">
    <property type="taxonomic scope" value="Eukaryota"/>
</dbReference>
<dbReference type="GeneTree" id="ENSGT00940000154228"/>
<dbReference type="HOGENOM" id="CLU_030831_3_3_1"/>
<dbReference type="InParanoid" id="Q09336"/>
<dbReference type="OMA" id="FISECVE"/>
<dbReference type="OrthoDB" id="616263at2759"/>
<dbReference type="PhylomeDB" id="Q09336"/>
<dbReference type="PRO" id="PR:Q09336"/>
<dbReference type="Proteomes" id="UP000001940">
    <property type="component" value="Chromosome II"/>
</dbReference>
<dbReference type="Bgee" id="WBGene00022890">
    <property type="expression patterns" value="Expressed in pharyngeal muscle cell (C elegans) and 2 other cell types or tissues"/>
</dbReference>
<dbReference type="CDD" id="cd22150">
    <property type="entry name" value="F-box_CeFBXA-like"/>
    <property type="match status" value="1"/>
</dbReference>
<dbReference type="InterPro" id="IPR002900">
    <property type="entry name" value="DUF38/FTH_CAE_spp"/>
</dbReference>
<dbReference type="InterPro" id="IPR001810">
    <property type="entry name" value="F-box_dom"/>
</dbReference>
<dbReference type="InterPro" id="IPR040161">
    <property type="entry name" value="FB224"/>
</dbReference>
<dbReference type="InterPro" id="IPR041426">
    <property type="entry name" value="Mos1_HTH"/>
</dbReference>
<dbReference type="PANTHER" id="PTHR23015:SF4">
    <property type="entry name" value="DUF38 DOMAIN-CONTAINING PROTEIN-RELATED"/>
    <property type="match status" value="1"/>
</dbReference>
<dbReference type="PANTHER" id="PTHR23015">
    <property type="entry name" value="UNCHARACTERIZED C.ELEGANS PROTEIN"/>
    <property type="match status" value="1"/>
</dbReference>
<dbReference type="Pfam" id="PF00646">
    <property type="entry name" value="F-box"/>
    <property type="match status" value="1"/>
</dbReference>
<dbReference type="Pfam" id="PF01827">
    <property type="entry name" value="FTH"/>
    <property type="match status" value="1"/>
</dbReference>
<dbReference type="Pfam" id="PF17906">
    <property type="entry name" value="HTH_48"/>
    <property type="match status" value="1"/>
</dbReference>
<dbReference type="SMART" id="SM00256">
    <property type="entry name" value="FBOX"/>
    <property type="match status" value="1"/>
</dbReference>
<dbReference type="PROSITE" id="PS50181">
    <property type="entry name" value="FBOX"/>
    <property type="match status" value="1"/>
</dbReference>
<keyword id="KW-1185">Reference proteome</keyword>
<accession>Q09336</accession>